<accession>B1I4K2</accession>
<reference key="1">
    <citation type="submission" date="2007-10" db="EMBL/GenBank/DDBJ databases">
        <title>Complete sequence of chromosome of Desulforudis audaxviator MP104C.</title>
        <authorList>
            <person name="Copeland A."/>
            <person name="Lucas S."/>
            <person name="Lapidus A."/>
            <person name="Barry K."/>
            <person name="Glavina del Rio T."/>
            <person name="Dalin E."/>
            <person name="Tice H."/>
            <person name="Bruce D."/>
            <person name="Pitluck S."/>
            <person name="Lowry S.R."/>
            <person name="Larimer F."/>
            <person name="Land M.L."/>
            <person name="Hauser L."/>
            <person name="Kyrpides N."/>
            <person name="Ivanova N.N."/>
            <person name="Richardson P."/>
        </authorList>
    </citation>
    <scope>NUCLEOTIDE SEQUENCE [LARGE SCALE GENOMIC DNA]</scope>
    <source>
        <strain>MP104C</strain>
    </source>
</reference>
<proteinExistence type="inferred from homology"/>
<organism>
    <name type="scientific">Desulforudis audaxviator (strain MP104C)</name>
    <dbReference type="NCBI Taxonomy" id="477974"/>
    <lineage>
        <taxon>Bacteria</taxon>
        <taxon>Bacillati</taxon>
        <taxon>Bacillota</taxon>
        <taxon>Clostridia</taxon>
        <taxon>Thermoanaerobacterales</taxon>
        <taxon>Candidatus Desulforudaceae</taxon>
        <taxon>Candidatus Desulforudis</taxon>
    </lineage>
</organism>
<feature type="chain" id="PRO_1000139226" description="UPF0210 protein Daud_1353">
    <location>
        <begin position="1"/>
        <end position="452"/>
    </location>
</feature>
<gene>
    <name type="ordered locus">Daud_1353</name>
</gene>
<sequence>MLGVDEIIQTIKMIQEENLDIRTITMGVSLLDCAASDPVAVCDKVHRKVTRLAGRLVEIGNEIEREYGIPIVNKRIAVTPVALIIGEMGRDGCLALARTLDRAAAEVGVNFIGGYSTLVHKGFTRGDRELIASLPEALAATERVCASVNVATSKAGINMDAVRLMGAVIKETAARTADRSAIGCAKLVVFANAPEDNPFMAGAFHGVGEPECVINVGVSGPGVVKNAVARLPDADLGALAEEIKKTAFKITRMGELVGRETAKRLGVPFGIVDLSLAPTPAVGDSVAEIIEALGVEACGAPGTTAALALLNDAVKKGGAMASSRVGGLSGAFIPVSEDAGMIRAVAAGALGLDKLEAMTAVCSVGIDMVALPGDTSAETIAALIADEITIGVVNHKTTAVRLIPVPGKRAGEFVEFGGLLGRTPIMEVNHFGAAKFVHRGGRIPAPISSLNN</sequence>
<dbReference type="EMBL" id="CP000860">
    <property type="protein sequence ID" value="ACA59862.1"/>
    <property type="molecule type" value="Genomic_DNA"/>
</dbReference>
<dbReference type="RefSeq" id="WP_012302447.1">
    <property type="nucleotide sequence ID" value="NC_010424.1"/>
</dbReference>
<dbReference type="SMR" id="B1I4K2"/>
<dbReference type="STRING" id="477974.Daud_1353"/>
<dbReference type="KEGG" id="dau:Daud_1353"/>
<dbReference type="eggNOG" id="COG2848">
    <property type="taxonomic scope" value="Bacteria"/>
</dbReference>
<dbReference type="HOGENOM" id="CLU_048704_0_0_9"/>
<dbReference type="OrthoDB" id="9763001at2"/>
<dbReference type="Proteomes" id="UP000008544">
    <property type="component" value="Chromosome"/>
</dbReference>
<dbReference type="CDD" id="cd08025">
    <property type="entry name" value="RNR_PFL_like_DUF711"/>
    <property type="match status" value="1"/>
</dbReference>
<dbReference type="Gene3D" id="3.20.70.20">
    <property type="match status" value="1"/>
</dbReference>
<dbReference type="HAMAP" id="MF_01221">
    <property type="entry name" value="UPF0210"/>
    <property type="match status" value="1"/>
</dbReference>
<dbReference type="InterPro" id="IPR007841">
    <property type="entry name" value="UPF0210"/>
</dbReference>
<dbReference type="NCBIfam" id="NF003700">
    <property type="entry name" value="PRK05313.1"/>
    <property type="match status" value="1"/>
</dbReference>
<dbReference type="PANTHER" id="PTHR37560:SF1">
    <property type="entry name" value="UPF0210 PROTEIN MJ1665"/>
    <property type="match status" value="1"/>
</dbReference>
<dbReference type="PANTHER" id="PTHR37560">
    <property type="entry name" value="UPF0210 PROTEIN SPR0218"/>
    <property type="match status" value="1"/>
</dbReference>
<dbReference type="Pfam" id="PF05167">
    <property type="entry name" value="DUF711"/>
    <property type="match status" value="1"/>
</dbReference>
<dbReference type="SUPFAM" id="SSF51998">
    <property type="entry name" value="PFL-like glycyl radical enzymes"/>
    <property type="match status" value="1"/>
</dbReference>
<protein>
    <recommendedName>
        <fullName evidence="1">UPF0210 protein Daud_1353</fullName>
    </recommendedName>
</protein>
<evidence type="ECO:0000255" key="1">
    <source>
        <dbReference type="HAMAP-Rule" id="MF_01221"/>
    </source>
</evidence>
<comment type="subunit">
    <text evidence="1">Homodimer.</text>
</comment>
<comment type="similarity">
    <text evidence="1">Belongs to the UPF0210 family.</text>
</comment>
<name>Y1353_DESAP</name>
<keyword id="KW-1185">Reference proteome</keyword>